<comment type="catalytic activity">
    <reaction evidence="1">
        <text>1-(5-phospho-beta-D-ribosyl)-5-[(5-phospho-beta-D-ribosylamino)methylideneamino]imidazole-4-carboxamide = 5-[(5-phospho-1-deoxy-D-ribulos-1-ylimino)methylamino]-1-(5-phospho-beta-D-ribosyl)imidazole-4-carboxamide</text>
        <dbReference type="Rhea" id="RHEA:15469"/>
        <dbReference type="ChEBI" id="CHEBI:58435"/>
        <dbReference type="ChEBI" id="CHEBI:58525"/>
        <dbReference type="EC" id="5.3.1.16"/>
    </reaction>
</comment>
<comment type="pathway">
    <text evidence="1">Amino-acid biosynthesis; L-histidine biosynthesis; L-histidine from 5-phospho-alpha-D-ribose 1-diphosphate: step 4/9.</text>
</comment>
<comment type="subcellular location">
    <subcellularLocation>
        <location evidence="1">Cytoplasm</location>
    </subcellularLocation>
</comment>
<comment type="similarity">
    <text evidence="1">Belongs to the HisA/HisF family.</text>
</comment>
<organism>
    <name type="scientific">Leptospira borgpetersenii serovar Hardjo-bovis (strain JB197)</name>
    <dbReference type="NCBI Taxonomy" id="355277"/>
    <lineage>
        <taxon>Bacteria</taxon>
        <taxon>Pseudomonadati</taxon>
        <taxon>Spirochaetota</taxon>
        <taxon>Spirochaetia</taxon>
        <taxon>Leptospirales</taxon>
        <taxon>Leptospiraceae</taxon>
        <taxon>Leptospira</taxon>
    </lineage>
</organism>
<feature type="chain" id="PRO_0000290486" description="1-(5-phosphoribosyl)-5-[(5-phosphoribosylamino)methylideneamino] imidazole-4-carboxamide isomerase">
    <location>
        <begin position="1"/>
        <end position="241"/>
    </location>
</feature>
<feature type="active site" description="Proton acceptor" evidence="1">
    <location>
        <position position="8"/>
    </location>
</feature>
<feature type="active site" description="Proton donor" evidence="1">
    <location>
        <position position="130"/>
    </location>
</feature>
<evidence type="ECO:0000255" key="1">
    <source>
        <dbReference type="HAMAP-Rule" id="MF_01014"/>
    </source>
</evidence>
<dbReference type="EC" id="5.3.1.16" evidence="1"/>
<dbReference type="EMBL" id="CP000350">
    <property type="protein sequence ID" value="ABJ74848.1"/>
    <property type="molecule type" value="Genomic_DNA"/>
</dbReference>
<dbReference type="RefSeq" id="WP_002724674.1">
    <property type="nucleotide sequence ID" value="NC_008510.1"/>
</dbReference>
<dbReference type="SMR" id="Q04W72"/>
<dbReference type="GeneID" id="61172272"/>
<dbReference type="KEGG" id="lbj:LBJ_0103"/>
<dbReference type="HOGENOM" id="CLU_048577_1_2_12"/>
<dbReference type="UniPathway" id="UPA00031">
    <property type="reaction ID" value="UER00009"/>
</dbReference>
<dbReference type="Proteomes" id="UP000000656">
    <property type="component" value="Chromosome 1"/>
</dbReference>
<dbReference type="GO" id="GO:0005737">
    <property type="term" value="C:cytoplasm"/>
    <property type="evidence" value="ECO:0007669"/>
    <property type="project" value="UniProtKB-SubCell"/>
</dbReference>
<dbReference type="GO" id="GO:0003949">
    <property type="term" value="F:1-(5-phosphoribosyl)-5-[(5-phosphoribosylamino)methylideneamino]imidazole-4-carboxamide isomerase activity"/>
    <property type="evidence" value="ECO:0007669"/>
    <property type="project" value="UniProtKB-UniRule"/>
</dbReference>
<dbReference type="GO" id="GO:0000105">
    <property type="term" value="P:L-histidine biosynthetic process"/>
    <property type="evidence" value="ECO:0007669"/>
    <property type="project" value="UniProtKB-UniRule"/>
</dbReference>
<dbReference type="GO" id="GO:0000162">
    <property type="term" value="P:L-tryptophan biosynthetic process"/>
    <property type="evidence" value="ECO:0007669"/>
    <property type="project" value="TreeGrafter"/>
</dbReference>
<dbReference type="CDD" id="cd04732">
    <property type="entry name" value="HisA"/>
    <property type="match status" value="1"/>
</dbReference>
<dbReference type="FunFam" id="3.20.20.70:FF:000009">
    <property type="entry name" value="1-(5-phosphoribosyl)-5-[(5-phosphoribosylamino)methylideneamino] imidazole-4-carboxamide isomerase"/>
    <property type="match status" value="1"/>
</dbReference>
<dbReference type="Gene3D" id="3.20.20.70">
    <property type="entry name" value="Aldolase class I"/>
    <property type="match status" value="1"/>
</dbReference>
<dbReference type="HAMAP" id="MF_01014">
    <property type="entry name" value="HisA"/>
    <property type="match status" value="1"/>
</dbReference>
<dbReference type="InterPro" id="IPR013785">
    <property type="entry name" value="Aldolase_TIM"/>
</dbReference>
<dbReference type="InterPro" id="IPR006062">
    <property type="entry name" value="His_biosynth"/>
</dbReference>
<dbReference type="InterPro" id="IPR006063">
    <property type="entry name" value="HisA_bact_arch"/>
</dbReference>
<dbReference type="InterPro" id="IPR044524">
    <property type="entry name" value="Isoase_HisA-like"/>
</dbReference>
<dbReference type="InterPro" id="IPR023016">
    <property type="entry name" value="Isoase_HisA-like_bact"/>
</dbReference>
<dbReference type="InterPro" id="IPR011060">
    <property type="entry name" value="RibuloseP-bd_barrel"/>
</dbReference>
<dbReference type="NCBIfam" id="TIGR00007">
    <property type="entry name" value="1-(5-phosphoribosyl)-5-[(5-phosphoribosylamino)methylideneamino]imidazole-4-carboxamide isomerase"/>
    <property type="match status" value="1"/>
</dbReference>
<dbReference type="PANTHER" id="PTHR43090">
    <property type="entry name" value="1-(5-PHOSPHORIBOSYL)-5-[(5-PHOSPHORIBOSYLAMINO)METHYLIDENEAMINO] IMIDAZOLE-4-CARBOXAMIDE ISOMERASE"/>
    <property type="match status" value="1"/>
</dbReference>
<dbReference type="PANTHER" id="PTHR43090:SF2">
    <property type="entry name" value="1-(5-PHOSPHORIBOSYL)-5-[(5-PHOSPHORIBOSYLAMINO)METHYLIDENEAMINO] IMIDAZOLE-4-CARBOXAMIDE ISOMERASE"/>
    <property type="match status" value="1"/>
</dbReference>
<dbReference type="Pfam" id="PF00977">
    <property type="entry name" value="His_biosynth"/>
    <property type="match status" value="1"/>
</dbReference>
<dbReference type="SUPFAM" id="SSF51366">
    <property type="entry name" value="Ribulose-phoshate binding barrel"/>
    <property type="match status" value="1"/>
</dbReference>
<accession>Q04W72</accession>
<name>HIS4_LEPBJ</name>
<protein>
    <recommendedName>
        <fullName evidence="1">1-(5-phosphoribosyl)-5-[(5-phosphoribosylamino)methylideneamino] imidazole-4-carboxamide isomerase</fullName>
        <ecNumber evidence="1">5.3.1.16</ecNumber>
    </recommendedName>
    <alternativeName>
        <fullName evidence="1">Phosphoribosylformimino-5-aminoimidazole carboxamide ribotide isomerase</fullName>
    </alternativeName>
</protein>
<keyword id="KW-0028">Amino-acid biosynthesis</keyword>
<keyword id="KW-0963">Cytoplasm</keyword>
<keyword id="KW-0368">Histidine biosynthesis</keyword>
<keyword id="KW-0413">Isomerase</keyword>
<sequence>MIIIPAIDLFDNCAVRLFKGNYKEKKIYSSEPWKLAEGFAKNGATLLHLVDLNGARNQLGINEDSILKIRKTTSLKVQLGGGIRDKEKLAYYDKIGIDRFILGTAAVTDPDLLKFALDNYGKERVVVAVDAIDGIVKIAGWEKDSGVRYRDLMDRLAKAGIEHIVFTDIAQDGTLAGPNLKAYQEILNSYPFQVIASGGISSLKDLMDLSSLKTKIPLYGVITGKALYEGKLDLAKAISSI</sequence>
<reference key="1">
    <citation type="journal article" date="2006" name="Proc. Natl. Acad. Sci. U.S.A.">
        <title>Genome reduction in Leptospira borgpetersenii reflects limited transmission potential.</title>
        <authorList>
            <person name="Bulach D.M."/>
            <person name="Zuerner R.L."/>
            <person name="Wilson P."/>
            <person name="Seemann T."/>
            <person name="McGrath A."/>
            <person name="Cullen P.A."/>
            <person name="Davis J."/>
            <person name="Johnson M."/>
            <person name="Kuczek E."/>
            <person name="Alt D.P."/>
            <person name="Peterson-Burch B."/>
            <person name="Coppel R.L."/>
            <person name="Rood J.I."/>
            <person name="Davies J.K."/>
            <person name="Adler B."/>
        </authorList>
    </citation>
    <scope>NUCLEOTIDE SEQUENCE [LARGE SCALE GENOMIC DNA]</scope>
    <source>
        <strain>JB197</strain>
    </source>
</reference>
<gene>
    <name evidence="1" type="primary">hisA</name>
    <name type="ordered locus">LBJ_0103</name>
</gene>
<proteinExistence type="inferred from homology"/>